<accession>A1VZV0</accession>
<name>YIDD_CAMJJ</name>
<sequence>MICLKILRFYQKFLSPLKPAACRYYPSCSEYALWQFQKKNFFLAFFSTFFRILRCNPFFKGGFDYPRVSKNFYPINLCFKPIFLAKKQLCFLYIPYKNKSFYLIKIIFKRTNQ</sequence>
<feature type="chain" id="PRO_1000013080" description="Putative membrane protein insertion efficiency factor">
    <location>
        <begin position="1"/>
        <end position="113"/>
    </location>
</feature>
<proteinExistence type="inferred from homology"/>
<comment type="function">
    <text evidence="1">Could be involved in insertion of integral membrane proteins into the membrane.</text>
</comment>
<comment type="subcellular location">
    <subcellularLocation>
        <location evidence="1">Cell inner membrane</location>
        <topology evidence="1">Peripheral membrane protein</topology>
        <orientation evidence="1">Cytoplasmic side</orientation>
    </subcellularLocation>
</comment>
<comment type="similarity">
    <text evidence="1">Belongs to the UPF0161 family.</text>
</comment>
<dbReference type="EMBL" id="CP000538">
    <property type="protein sequence ID" value="EAQ71891.1"/>
    <property type="molecule type" value="Genomic_DNA"/>
</dbReference>
<dbReference type="KEGG" id="cjj:CJJ81176_0982"/>
<dbReference type="eggNOG" id="COG0759">
    <property type="taxonomic scope" value="Bacteria"/>
</dbReference>
<dbReference type="HOGENOM" id="CLU_144811_4_0_7"/>
<dbReference type="Proteomes" id="UP000000646">
    <property type="component" value="Chromosome"/>
</dbReference>
<dbReference type="GO" id="GO:0005886">
    <property type="term" value="C:plasma membrane"/>
    <property type="evidence" value="ECO:0007669"/>
    <property type="project" value="UniProtKB-SubCell"/>
</dbReference>
<dbReference type="HAMAP" id="MF_00386">
    <property type="entry name" value="UPF0161_YidD"/>
    <property type="match status" value="1"/>
</dbReference>
<dbReference type="InterPro" id="IPR002696">
    <property type="entry name" value="Membr_insert_effic_factor_YidD"/>
</dbReference>
<dbReference type="NCBIfam" id="TIGR00278">
    <property type="entry name" value="membrane protein insertion efficiency factor YidD"/>
    <property type="match status" value="1"/>
</dbReference>
<dbReference type="PANTHER" id="PTHR33383">
    <property type="entry name" value="MEMBRANE PROTEIN INSERTION EFFICIENCY FACTOR-RELATED"/>
    <property type="match status" value="1"/>
</dbReference>
<dbReference type="PANTHER" id="PTHR33383:SF1">
    <property type="entry name" value="MEMBRANE PROTEIN INSERTION EFFICIENCY FACTOR-RELATED"/>
    <property type="match status" value="1"/>
</dbReference>
<dbReference type="Pfam" id="PF01809">
    <property type="entry name" value="YidD"/>
    <property type="match status" value="1"/>
</dbReference>
<dbReference type="SMART" id="SM01234">
    <property type="entry name" value="Haemolytic"/>
    <property type="match status" value="1"/>
</dbReference>
<keyword id="KW-0997">Cell inner membrane</keyword>
<keyword id="KW-1003">Cell membrane</keyword>
<keyword id="KW-0472">Membrane</keyword>
<organism>
    <name type="scientific">Campylobacter jejuni subsp. jejuni serotype O:23/36 (strain 81-176)</name>
    <dbReference type="NCBI Taxonomy" id="354242"/>
    <lineage>
        <taxon>Bacteria</taxon>
        <taxon>Pseudomonadati</taxon>
        <taxon>Campylobacterota</taxon>
        <taxon>Epsilonproteobacteria</taxon>
        <taxon>Campylobacterales</taxon>
        <taxon>Campylobacteraceae</taxon>
        <taxon>Campylobacter</taxon>
    </lineage>
</organism>
<reference key="1">
    <citation type="submission" date="2006-12" db="EMBL/GenBank/DDBJ databases">
        <authorList>
            <person name="Fouts D.E."/>
            <person name="Nelson K.E."/>
            <person name="Sebastian Y."/>
        </authorList>
    </citation>
    <scope>NUCLEOTIDE SEQUENCE [LARGE SCALE GENOMIC DNA]</scope>
    <source>
        <strain>81-176</strain>
    </source>
</reference>
<evidence type="ECO:0000255" key="1">
    <source>
        <dbReference type="HAMAP-Rule" id="MF_00386"/>
    </source>
</evidence>
<gene>
    <name type="ordered locus">CJJ81176_0982</name>
</gene>
<protein>
    <recommendedName>
        <fullName evidence="1">Putative membrane protein insertion efficiency factor</fullName>
    </recommendedName>
</protein>